<organism>
    <name type="scientific">Pseudomonas syringae pv. syringae (strain B728a)</name>
    <dbReference type="NCBI Taxonomy" id="205918"/>
    <lineage>
        <taxon>Bacteria</taxon>
        <taxon>Pseudomonadati</taxon>
        <taxon>Pseudomonadota</taxon>
        <taxon>Gammaproteobacteria</taxon>
        <taxon>Pseudomonadales</taxon>
        <taxon>Pseudomonadaceae</taxon>
        <taxon>Pseudomonas</taxon>
        <taxon>Pseudomonas syringae</taxon>
    </lineage>
</organism>
<proteinExistence type="inferred from homology"/>
<evidence type="ECO:0000255" key="1">
    <source>
        <dbReference type="HAMAP-Rule" id="MF_01445"/>
    </source>
</evidence>
<keyword id="KW-0012">Acyltransferase</keyword>
<keyword id="KW-0963">Cytoplasm</keyword>
<keyword id="KW-0408">Iron</keyword>
<keyword id="KW-0479">Metal-binding</keyword>
<keyword id="KW-0808">Transferase</keyword>
<keyword id="KW-0819">tRNA processing</keyword>
<protein>
    <recommendedName>
        <fullName evidence="1">tRNA N6-adenosine threonylcarbamoyltransferase</fullName>
        <ecNumber evidence="1">2.3.1.234</ecNumber>
    </recommendedName>
    <alternativeName>
        <fullName evidence="1">N6-L-threonylcarbamoyladenine synthase</fullName>
        <shortName evidence="1">t(6)A synthase</shortName>
    </alternativeName>
    <alternativeName>
        <fullName evidence="1">t(6)A37 threonylcarbamoyladenosine biosynthesis protein TsaD</fullName>
    </alternativeName>
    <alternativeName>
        <fullName evidence="1">tRNA threonylcarbamoyladenosine biosynthesis protein TsaD</fullName>
    </alternativeName>
</protein>
<accession>Q4ZMF4</accession>
<name>TSAD_PSEU2</name>
<reference key="1">
    <citation type="journal article" date="2005" name="Proc. Natl. Acad. Sci. U.S.A.">
        <title>Comparison of the complete genome sequences of Pseudomonas syringae pv. syringae B728a and pv. tomato DC3000.</title>
        <authorList>
            <person name="Feil H."/>
            <person name="Feil W.S."/>
            <person name="Chain P."/>
            <person name="Larimer F."/>
            <person name="Dibartolo G."/>
            <person name="Copeland A."/>
            <person name="Lykidis A."/>
            <person name="Trong S."/>
            <person name="Nolan M."/>
            <person name="Goltsman E."/>
            <person name="Thiel J."/>
            <person name="Malfatti S."/>
            <person name="Loper J.E."/>
            <person name="Lapidus A."/>
            <person name="Detter J.C."/>
            <person name="Land M."/>
            <person name="Richardson P.M."/>
            <person name="Kyrpides N.C."/>
            <person name="Ivanova N."/>
            <person name="Lindow S.E."/>
        </authorList>
    </citation>
    <scope>NUCLEOTIDE SEQUENCE [LARGE SCALE GENOMIC DNA]</scope>
    <source>
        <strain>B728a</strain>
    </source>
</reference>
<dbReference type="EC" id="2.3.1.234" evidence="1"/>
<dbReference type="EMBL" id="CP000075">
    <property type="protein sequence ID" value="AAY39668.1"/>
    <property type="molecule type" value="Genomic_DNA"/>
</dbReference>
<dbReference type="RefSeq" id="WP_003394970.1">
    <property type="nucleotide sequence ID" value="NC_007005.1"/>
</dbReference>
<dbReference type="RefSeq" id="YP_237706.1">
    <property type="nucleotide sequence ID" value="NC_007005.1"/>
</dbReference>
<dbReference type="SMR" id="Q4ZMF4"/>
<dbReference type="STRING" id="205918.Psyr_4638"/>
<dbReference type="KEGG" id="psb:Psyr_4638"/>
<dbReference type="PATRIC" id="fig|205918.7.peg.4783"/>
<dbReference type="eggNOG" id="COG0533">
    <property type="taxonomic scope" value="Bacteria"/>
</dbReference>
<dbReference type="HOGENOM" id="CLU_023208_0_0_6"/>
<dbReference type="OrthoDB" id="9806197at2"/>
<dbReference type="Proteomes" id="UP000000426">
    <property type="component" value="Chromosome"/>
</dbReference>
<dbReference type="GO" id="GO:0005737">
    <property type="term" value="C:cytoplasm"/>
    <property type="evidence" value="ECO:0007669"/>
    <property type="project" value="UniProtKB-SubCell"/>
</dbReference>
<dbReference type="GO" id="GO:0005506">
    <property type="term" value="F:iron ion binding"/>
    <property type="evidence" value="ECO:0007669"/>
    <property type="project" value="UniProtKB-UniRule"/>
</dbReference>
<dbReference type="GO" id="GO:0061711">
    <property type="term" value="F:N(6)-L-threonylcarbamoyladenine synthase activity"/>
    <property type="evidence" value="ECO:0007669"/>
    <property type="project" value="UniProtKB-EC"/>
</dbReference>
<dbReference type="GO" id="GO:0002949">
    <property type="term" value="P:tRNA threonylcarbamoyladenosine modification"/>
    <property type="evidence" value="ECO:0007669"/>
    <property type="project" value="UniProtKB-UniRule"/>
</dbReference>
<dbReference type="CDD" id="cd24133">
    <property type="entry name" value="ASKHA_NBD_TsaD_bac"/>
    <property type="match status" value="1"/>
</dbReference>
<dbReference type="FunFam" id="3.30.420.40:FF:000012">
    <property type="entry name" value="tRNA N6-adenosine threonylcarbamoyltransferase"/>
    <property type="match status" value="1"/>
</dbReference>
<dbReference type="FunFam" id="3.30.420.40:FF:000031">
    <property type="entry name" value="tRNA N6-adenosine threonylcarbamoyltransferase"/>
    <property type="match status" value="1"/>
</dbReference>
<dbReference type="Gene3D" id="3.30.420.40">
    <property type="match status" value="2"/>
</dbReference>
<dbReference type="HAMAP" id="MF_01445">
    <property type="entry name" value="TsaD"/>
    <property type="match status" value="1"/>
</dbReference>
<dbReference type="InterPro" id="IPR043129">
    <property type="entry name" value="ATPase_NBD"/>
</dbReference>
<dbReference type="InterPro" id="IPR000905">
    <property type="entry name" value="Gcp-like_dom"/>
</dbReference>
<dbReference type="InterPro" id="IPR017861">
    <property type="entry name" value="KAE1/TsaD"/>
</dbReference>
<dbReference type="InterPro" id="IPR022450">
    <property type="entry name" value="TsaD"/>
</dbReference>
<dbReference type="NCBIfam" id="TIGR00329">
    <property type="entry name" value="gcp_kae1"/>
    <property type="match status" value="1"/>
</dbReference>
<dbReference type="NCBIfam" id="TIGR03723">
    <property type="entry name" value="T6A_TsaD_YgjD"/>
    <property type="match status" value="1"/>
</dbReference>
<dbReference type="PANTHER" id="PTHR11735">
    <property type="entry name" value="TRNA N6-ADENOSINE THREONYLCARBAMOYLTRANSFERASE"/>
    <property type="match status" value="1"/>
</dbReference>
<dbReference type="PANTHER" id="PTHR11735:SF6">
    <property type="entry name" value="TRNA N6-ADENOSINE THREONYLCARBAMOYLTRANSFERASE, MITOCHONDRIAL"/>
    <property type="match status" value="1"/>
</dbReference>
<dbReference type="Pfam" id="PF00814">
    <property type="entry name" value="TsaD"/>
    <property type="match status" value="1"/>
</dbReference>
<dbReference type="PRINTS" id="PR00789">
    <property type="entry name" value="OSIALOPTASE"/>
</dbReference>
<dbReference type="SUPFAM" id="SSF53067">
    <property type="entry name" value="Actin-like ATPase domain"/>
    <property type="match status" value="2"/>
</dbReference>
<sequence length="341" mass="36528">MLVLGLETSCDETGVALYDSERGLLADALFSQIDLHRAYGGVVPELASRDHVKRMLPLIRQTLAEADCVATDIDAIAYTAGPGLVGALLVGASCAQALAFAWDIPALGVHHMEGHLLAPMLEENPPQFPFVALLVSGGHTQLVRVDGIGQYELLGETLDDAAGEAFDKTAKMMGMQYPGGPEISKAAMQGVAGRFVFPRPMTDRPGLEFSFSGLKTSALNTWQQCRNAGDDSEQTRCDIALAFQQAVVETLTIKCKRALKQTGLKSLVIAGGVSANKALRASLESMLGDLRGHVYYARPEFCTDNGAMIAFAGCQRLQVGQKEDLSISVQARWPMEQLSGL</sequence>
<comment type="function">
    <text evidence="1">Required for the formation of a threonylcarbamoyl group on adenosine at position 37 (t(6)A37) in tRNAs that read codons beginning with adenine. Is involved in the transfer of the threonylcarbamoyl moiety of threonylcarbamoyl-AMP (TC-AMP) to the N6 group of A37, together with TsaE and TsaB. TsaD likely plays a direct catalytic role in this reaction.</text>
</comment>
<comment type="catalytic activity">
    <reaction evidence="1">
        <text>L-threonylcarbamoyladenylate + adenosine(37) in tRNA = N(6)-L-threonylcarbamoyladenosine(37) in tRNA + AMP + H(+)</text>
        <dbReference type="Rhea" id="RHEA:37059"/>
        <dbReference type="Rhea" id="RHEA-COMP:10162"/>
        <dbReference type="Rhea" id="RHEA-COMP:10163"/>
        <dbReference type="ChEBI" id="CHEBI:15378"/>
        <dbReference type="ChEBI" id="CHEBI:73682"/>
        <dbReference type="ChEBI" id="CHEBI:74411"/>
        <dbReference type="ChEBI" id="CHEBI:74418"/>
        <dbReference type="ChEBI" id="CHEBI:456215"/>
        <dbReference type="EC" id="2.3.1.234"/>
    </reaction>
</comment>
<comment type="cofactor">
    <cofactor evidence="1">
        <name>Fe(2+)</name>
        <dbReference type="ChEBI" id="CHEBI:29033"/>
    </cofactor>
    <text evidence="1">Binds 1 Fe(2+) ion per subunit.</text>
</comment>
<comment type="subcellular location">
    <subcellularLocation>
        <location evidence="1">Cytoplasm</location>
    </subcellularLocation>
</comment>
<comment type="similarity">
    <text evidence="1">Belongs to the KAE1 / TsaD family.</text>
</comment>
<feature type="chain" id="PRO_0000303498" description="tRNA N6-adenosine threonylcarbamoyltransferase">
    <location>
        <begin position="1"/>
        <end position="341"/>
    </location>
</feature>
<feature type="binding site" evidence="1">
    <location>
        <position position="111"/>
    </location>
    <ligand>
        <name>Fe cation</name>
        <dbReference type="ChEBI" id="CHEBI:24875"/>
    </ligand>
</feature>
<feature type="binding site" evidence="1">
    <location>
        <position position="115"/>
    </location>
    <ligand>
        <name>Fe cation</name>
        <dbReference type="ChEBI" id="CHEBI:24875"/>
    </ligand>
</feature>
<feature type="binding site" evidence="1">
    <location>
        <begin position="134"/>
        <end position="138"/>
    </location>
    <ligand>
        <name>substrate</name>
    </ligand>
</feature>
<feature type="binding site" evidence="1">
    <location>
        <position position="167"/>
    </location>
    <ligand>
        <name>substrate</name>
    </ligand>
</feature>
<feature type="binding site" evidence="1">
    <location>
        <position position="180"/>
    </location>
    <ligand>
        <name>substrate</name>
    </ligand>
</feature>
<feature type="binding site" evidence="1">
    <location>
        <position position="276"/>
    </location>
    <ligand>
        <name>substrate</name>
    </ligand>
</feature>
<feature type="binding site" evidence="1">
    <location>
        <position position="304"/>
    </location>
    <ligand>
        <name>Fe cation</name>
        <dbReference type="ChEBI" id="CHEBI:24875"/>
    </ligand>
</feature>
<gene>
    <name evidence="1" type="primary">tsaD</name>
    <name type="synonym">gcp</name>
    <name type="ordered locus">Psyr_4638</name>
</gene>